<dbReference type="EC" id="2.7.2.4" evidence="13"/>
<dbReference type="EMBL" id="DS231721">
    <property type="protein sequence ID" value="KNB17121.1"/>
    <property type="molecule type" value="Genomic_DNA"/>
</dbReference>
<dbReference type="RefSeq" id="XP_018255166.1">
    <property type="nucleotide sequence ID" value="XM_018395331.1"/>
</dbReference>
<dbReference type="SMR" id="A0A0D2YG09"/>
<dbReference type="STRING" id="426428.A0A0D2YG09"/>
<dbReference type="EnsemblFungi" id="FOXG_15247T0">
    <property type="protein sequence ID" value="FOXG_15247P0"/>
    <property type="gene ID" value="FOXG_15247"/>
</dbReference>
<dbReference type="GeneID" id="28956321"/>
<dbReference type="KEGG" id="fox:FOXG_15247"/>
<dbReference type="VEuPathDB" id="FungiDB:FOXG_15247"/>
<dbReference type="OMA" id="QSIHEGN"/>
<dbReference type="OrthoDB" id="58550at110618"/>
<dbReference type="Proteomes" id="UP000009097">
    <property type="component" value="Unassembled WGS sequence"/>
</dbReference>
<dbReference type="GO" id="GO:0005829">
    <property type="term" value="C:cytosol"/>
    <property type="evidence" value="ECO:0007669"/>
    <property type="project" value="TreeGrafter"/>
</dbReference>
<dbReference type="GO" id="GO:0004072">
    <property type="term" value="F:aspartate kinase activity"/>
    <property type="evidence" value="ECO:0007669"/>
    <property type="project" value="UniProtKB-EC"/>
</dbReference>
<dbReference type="GO" id="GO:0005524">
    <property type="term" value="F:ATP binding"/>
    <property type="evidence" value="ECO:0007669"/>
    <property type="project" value="UniProtKB-KW"/>
</dbReference>
<dbReference type="GO" id="GO:0009090">
    <property type="term" value="P:homoserine biosynthetic process"/>
    <property type="evidence" value="ECO:0007669"/>
    <property type="project" value="TreeGrafter"/>
</dbReference>
<dbReference type="GO" id="GO:0009089">
    <property type="term" value="P:lysine biosynthetic process via diaminopimelate"/>
    <property type="evidence" value="ECO:0007669"/>
    <property type="project" value="TreeGrafter"/>
</dbReference>
<dbReference type="FunFam" id="3.30.2130.10:FF:000001">
    <property type="entry name" value="Bifunctional aspartokinase/homoserine dehydrogenase"/>
    <property type="match status" value="1"/>
</dbReference>
<dbReference type="Gene3D" id="3.40.1160.10">
    <property type="entry name" value="Acetylglutamate kinase-like"/>
    <property type="match status" value="1"/>
</dbReference>
<dbReference type="Gene3D" id="3.30.70.1060">
    <property type="entry name" value="Dimeric alpha+beta barrel"/>
    <property type="match status" value="1"/>
</dbReference>
<dbReference type="Gene3D" id="3.30.2130.10">
    <property type="entry name" value="VC0802-like"/>
    <property type="match status" value="1"/>
</dbReference>
<dbReference type="InterPro" id="IPR036393">
    <property type="entry name" value="AceGlu_kinase-like_sf"/>
</dbReference>
<dbReference type="InterPro" id="IPR045865">
    <property type="entry name" value="ACT-like_dom_sf"/>
</dbReference>
<dbReference type="InterPro" id="IPR054352">
    <property type="entry name" value="ACT_Aspartokinase"/>
</dbReference>
<dbReference type="InterPro" id="IPR002912">
    <property type="entry name" value="ACT_dom"/>
</dbReference>
<dbReference type="InterPro" id="IPR001048">
    <property type="entry name" value="Asp/Glu/Uridylate_kinase"/>
</dbReference>
<dbReference type="InterPro" id="IPR001341">
    <property type="entry name" value="Asp_kinase"/>
</dbReference>
<dbReference type="InterPro" id="IPR018042">
    <property type="entry name" value="Aspartate_kinase_CS"/>
</dbReference>
<dbReference type="InterPro" id="IPR011008">
    <property type="entry name" value="Dimeric_a/b-barrel"/>
</dbReference>
<dbReference type="InterPro" id="IPR005545">
    <property type="entry name" value="YCII"/>
</dbReference>
<dbReference type="NCBIfam" id="TIGR00657">
    <property type="entry name" value="asp_kinases"/>
    <property type="match status" value="1"/>
</dbReference>
<dbReference type="PANTHER" id="PTHR21499">
    <property type="entry name" value="ASPARTATE KINASE"/>
    <property type="match status" value="1"/>
</dbReference>
<dbReference type="PANTHER" id="PTHR21499:SF59">
    <property type="entry name" value="ASPARTOKINASE"/>
    <property type="match status" value="1"/>
</dbReference>
<dbReference type="Pfam" id="PF00696">
    <property type="entry name" value="AA_kinase"/>
    <property type="match status" value="1"/>
</dbReference>
<dbReference type="Pfam" id="PF22468">
    <property type="entry name" value="ACT_9"/>
    <property type="match status" value="1"/>
</dbReference>
<dbReference type="Pfam" id="PF03795">
    <property type="entry name" value="YCII"/>
    <property type="match status" value="1"/>
</dbReference>
<dbReference type="SUPFAM" id="SSF55021">
    <property type="entry name" value="ACT-like"/>
    <property type="match status" value="2"/>
</dbReference>
<dbReference type="SUPFAM" id="SSF53633">
    <property type="entry name" value="Carbamate kinase-like"/>
    <property type="match status" value="1"/>
</dbReference>
<dbReference type="SUPFAM" id="SSF54909">
    <property type="entry name" value="Dimeric alpha+beta barrel"/>
    <property type="match status" value="1"/>
</dbReference>
<dbReference type="PROSITE" id="PS51671">
    <property type="entry name" value="ACT"/>
    <property type="match status" value="2"/>
</dbReference>
<dbReference type="PROSITE" id="PS00324">
    <property type="entry name" value="ASPARTOKINASE"/>
    <property type="match status" value="1"/>
</dbReference>
<accession>A0A0D2YG09</accession>
<keyword id="KW-0067">ATP-binding</keyword>
<keyword id="KW-0418">Kinase</keyword>
<keyword id="KW-0547">Nucleotide-binding</keyword>
<keyword id="KW-0597">Phosphoprotein</keyword>
<keyword id="KW-1185">Reference proteome</keyword>
<keyword id="KW-0677">Repeat</keyword>
<keyword id="KW-0808">Transferase</keyword>
<comment type="function">
    <text evidence="1 10">Aspartate kinase; part of the gene cluster that mediates the biosynthesis of fusaric acid, a mycotoxin with low to moderate toxicity to animals and humans, but with high phytotoxic properties (PubMed:25372119). L-aspartate is suggested as fusaric acid amino acid precursor that is activated and further processed to O-acetyl-L-homoserine by cluster enzymes aspartate kinase FUB3 and homoserine O-acetyltransferase FUB5, as well as enzymes of the primary metabolism (By similarity). The polyketide synthase (PKS) FUB1 generates the triketide trans-2-hexenal which is presumptively released by the hydrolase FUB4 and linked to the NRPS-bound amino acid precursor by NAD(P)-dependent dehydrogenase FUB6 (By similarity). FUB1, FUB4, and the non-canonical NRPS Fub8 may form an enzyme complex (By similarity). Further processing of the NRPS-bound intermediate might be carried out by FUB6 and the sulfhydrylase FUB7, enabling a spontaneous electrocyclization to close the carbon backbone of fusaric acid (By similarity). Dihydrofusaric acid is likely to be released via reduction by the thioester reductase (TR) domain of FUB8 whereupon the final oxidation to fusaric acid may (also) be performed by the FMN-dependent dehydrogenase FUB9 (By similarity).</text>
</comment>
<comment type="catalytic activity">
    <reaction evidence="13">
        <text>L-aspartate + ATP = 4-phospho-L-aspartate + ADP</text>
        <dbReference type="Rhea" id="RHEA:23776"/>
        <dbReference type="ChEBI" id="CHEBI:29991"/>
        <dbReference type="ChEBI" id="CHEBI:30616"/>
        <dbReference type="ChEBI" id="CHEBI:57535"/>
        <dbReference type="ChEBI" id="CHEBI:456216"/>
        <dbReference type="EC" id="2.7.2.4"/>
    </reaction>
</comment>
<comment type="pathway">
    <text evidence="10">Mycotoxin biosynthesis.</text>
</comment>
<comment type="disruption phenotype">
    <text evidence="10">Impairs the production of fusaric acid (PubMed:25372119).</text>
</comment>
<comment type="biotechnology">
    <text evidence="3 4 5 6 7 8 9">Fusaric acid is phytotoxic to plants such as cotton and banana (PubMed:20955724, PubMed:23922960). It has been shown to induce programmed cell death in plants (PubMed:16868776, PubMed:23838885). In addition to a mild toxicity to animals, fusaric acid exhibits acanthamoebicidal, antioomycete, and antimycobacterial activities (PubMed:17927749, PubMed:21811925, PubMed:22864988).</text>
</comment>
<comment type="similarity">
    <text evidence="12">Belongs to the aspartokinase family.</text>
</comment>
<sequence length="542" mass="59732">MATELKEYLVIIPDLPDVLAKRQVLLKPHNQDAAPLVKAGRVPFFGSTLAHHSPEGQQVAENGTVMIIKAESEEEIREIIRKDIFTIEGVWDFGKLSIWPFKIARMRNRRDNSWVVQKFGGTSIGKFPDKTSSDMLCTKFRKESLRNNEQITADCQELLDYTSAAKRFNLDINGKAKDKMVSFGEKLSCRLMVAMLRDRDIPAEYVDLSDIVPSNNLDQLKPEFFHEAAAVFGKRVEACNGRVPVITGFFGTVPGSLIDSGIGRGYSDLCAVLVAIGLHAERVQIWKEVDGIFTADPREVPDARCLPSITPSEAAELTFYGSEVIHHLALSLAIQAKPPVSIFVKNVQKPWGQGTVVVPSDGDDTSSWPIDYLDPSDSDSTSSTALPKMPTAVTIKRDITIFNILSNKQSMSHGFFVKVFTILAEHDISVDLISTSEVHVSMAINSSNMEPSQIKNVQCRLSEEGEVNVLPDMAILSLVGAELKNMTGIAGRMFAILGEQHVNIEMISQGASEINISCVIPDKDATRALNMLHDELFTKSAI</sequence>
<protein>
    <recommendedName>
        <fullName evidence="11">Aspartate kinase FUB3</fullName>
        <ecNumber evidence="13">2.7.2.4</ecNumber>
    </recommendedName>
    <alternativeName>
        <fullName evidence="11">Fusaric acid biosynthesis protein 3</fullName>
    </alternativeName>
</protein>
<reference key="1">
    <citation type="journal article" date="2010" name="Nature">
        <title>Comparative genomics reveals mobile pathogenicity chromosomes in Fusarium.</title>
        <authorList>
            <person name="Ma L.-J."/>
            <person name="van der Does H.C."/>
            <person name="Borkovich K.A."/>
            <person name="Coleman J.J."/>
            <person name="Daboussi M.-J."/>
            <person name="Di Pietro A."/>
            <person name="Dufresne M."/>
            <person name="Freitag M."/>
            <person name="Grabherr M."/>
            <person name="Henrissat B."/>
            <person name="Houterman P.M."/>
            <person name="Kang S."/>
            <person name="Shim W.-B."/>
            <person name="Woloshuk C."/>
            <person name="Xie X."/>
            <person name="Xu J.-R."/>
            <person name="Antoniw J."/>
            <person name="Baker S.E."/>
            <person name="Bluhm B.H."/>
            <person name="Breakspear A."/>
            <person name="Brown D.W."/>
            <person name="Butchko R.A.E."/>
            <person name="Chapman S."/>
            <person name="Coulson R."/>
            <person name="Coutinho P.M."/>
            <person name="Danchin E.G.J."/>
            <person name="Diener A."/>
            <person name="Gale L.R."/>
            <person name="Gardiner D.M."/>
            <person name="Goff S."/>
            <person name="Hammond-Kosack K.E."/>
            <person name="Hilburn K."/>
            <person name="Hua-Van A."/>
            <person name="Jonkers W."/>
            <person name="Kazan K."/>
            <person name="Kodira C.D."/>
            <person name="Koehrsen M."/>
            <person name="Kumar L."/>
            <person name="Lee Y.-H."/>
            <person name="Li L."/>
            <person name="Manners J.M."/>
            <person name="Miranda-Saavedra D."/>
            <person name="Mukherjee M."/>
            <person name="Park G."/>
            <person name="Park J."/>
            <person name="Park S.-Y."/>
            <person name="Proctor R.H."/>
            <person name="Regev A."/>
            <person name="Ruiz-Roldan M.C."/>
            <person name="Sain D."/>
            <person name="Sakthikumar S."/>
            <person name="Sykes S."/>
            <person name="Schwartz D.C."/>
            <person name="Turgeon B.G."/>
            <person name="Wapinski I."/>
            <person name="Yoder O."/>
            <person name="Young S."/>
            <person name="Zeng Q."/>
            <person name="Zhou S."/>
            <person name="Galagan J."/>
            <person name="Cuomo C.A."/>
            <person name="Kistler H.C."/>
            <person name="Rep M."/>
        </authorList>
    </citation>
    <scope>NUCLEOTIDE SEQUENCE [LARGE SCALE GENOMIC DNA]</scope>
    <source>
        <strain>4287 / CBS 123668 / FGSC 9935 / NRRL 34936</strain>
    </source>
</reference>
<reference key="2">
    <citation type="submission" date="2015-03" db="UniProtKB">
        <authorList>
            <consortium name="EnsemblFungi"/>
        </authorList>
    </citation>
    <scope>IDENTIFICATION</scope>
    <source>
        <strain>4287 / CBS 123668 / FGSC 9935 / NRRL 34936</strain>
    </source>
</reference>
<reference key="3">
    <citation type="journal article" date="2006" name="Planta">
        <title>Fusaric acid induces apoptosis in saffron root-tip cells: roles of caspase-like activity, cytochrome c, and H2O2.</title>
        <authorList>
            <person name="Samadi L."/>
            <person name="Shahsavan Behboodi B."/>
        </authorList>
    </citation>
    <scope>BIOTECHNOLOGY</scope>
</reference>
<reference key="4">
    <citation type="journal article" date="2008" name="J. Appl. Microbiol.">
        <title>Bikaverin and fusaric acid from Fusarium oxysporum show antioomycete activity against Phytophthora infestans.</title>
        <authorList>
            <person name="Son S.W."/>
            <person name="Kim H.Y."/>
            <person name="Choi G.J."/>
            <person name="Lim H.K."/>
            <person name="Jang K.S."/>
            <person name="Lee S.O."/>
            <person name="Lee S."/>
            <person name="Sung N.D."/>
            <person name="Kim J.C."/>
        </authorList>
    </citation>
    <scope>BIOTECHNOLOGY</scope>
</reference>
<reference key="5">
    <citation type="journal article" date="2011" name="Arch. Pharm. Res.">
        <title>Antimycobacterial activity of fusaric acid from a mangrove endophyte and its metal complexes.</title>
        <authorList>
            <person name="Pan J.H."/>
            <person name="Chen Y."/>
            <person name="Huang Y.H."/>
            <person name="Tao Y.W."/>
            <person name="Wang J."/>
            <person name="Li Y."/>
            <person name="Peng Y."/>
            <person name="Dong T."/>
            <person name="Lai X.M."/>
            <person name="Lin Y.C."/>
        </authorList>
    </citation>
    <scope>BIOTECHNOLOGY</scope>
</reference>
<reference key="6">
    <citation type="journal article" date="2011" name="Toxicon">
        <title>Phytotoxicity of fusaric acid and analogs to cotton.</title>
        <authorList>
            <person name="Stipanovic R.D."/>
            <person name="Puckhaber L.S."/>
            <person name="Liu J."/>
            <person name="Bell A.A."/>
        </authorList>
    </citation>
    <scope>BIOTECHNOLOGY</scope>
</reference>
<reference key="7">
    <citation type="journal article" date="2012" name="Planta Med.">
        <title>In vitro acanthamoebicidal activity of fusaric acid and dehydrofusaric acid from an endophytic fungus Fusarium sp. Tlau3.</title>
        <authorList>
            <person name="Boonman N."/>
            <person name="Prachya S."/>
            <person name="Boonmee A."/>
            <person name="Kittakoop P."/>
            <person name="Wiyakrutta S."/>
            <person name="Sriubolmas N."/>
            <person name="Warit S."/>
            <person name="Dharmkrong-At Chusattayanond A."/>
        </authorList>
    </citation>
    <scope>BIOTECHNOLOGY</scope>
</reference>
<reference key="8">
    <citation type="journal article" date="2013" name="Planta">
        <title>Fusaric acid induction of programmed cell death modulated through nitric oxide signalling in tobacco suspension cells.</title>
        <authorList>
            <person name="Jiao J."/>
            <person name="Zhou B."/>
            <person name="Zhu X."/>
            <person name="Gao Z."/>
            <person name="Liang Y."/>
        </authorList>
    </citation>
    <scope>BIOTECHNOLOGY</scope>
</reference>
<reference key="9">
    <citation type="journal article" date="2013" name="PLoS ONE">
        <title>Contamination of bananas with beauvericin and fusaric acid produced by Fusarium oxysporum f. sp. cubense.</title>
        <authorList>
            <person name="Li C."/>
            <person name="Zuo C."/>
            <person name="Deng G."/>
            <person name="Kuang R."/>
            <person name="Yang Q."/>
            <person name="Hu C."/>
            <person name="Sheng O."/>
            <person name="Zhang S."/>
            <person name="Ma L."/>
            <person name="Wei Y."/>
            <person name="Yang J."/>
            <person name="Liu S."/>
            <person name="Biswas M.K."/>
            <person name="Viljoen A."/>
            <person name="Yi G."/>
        </authorList>
    </citation>
    <scope>BIOTECHNOLOGY</scope>
</reference>
<reference key="10">
    <citation type="journal article" date="2015" name="Mol. Plant Microbe Interact.">
        <title>Identification of a 12-gene fusaric acid biosynthetic gene cluster in Fusarium species through comparative and functional genomics.</title>
        <authorList>
            <person name="Brown D.W."/>
            <person name="Lee S.H."/>
            <person name="Kim L.H."/>
            <person name="Ryu J.G."/>
            <person name="Lee S."/>
            <person name="Seo Y."/>
            <person name="Kim Y.H."/>
            <person name="Busman M."/>
            <person name="Yun S.H."/>
            <person name="Proctor R.H."/>
            <person name="Lee T."/>
        </authorList>
    </citation>
    <scope>FUNCTION</scope>
    <scope>DISRUPTION PHENOTYPE</scope>
    <scope>CATALYTIC ACTIVITY</scope>
</reference>
<name>FUB3_FUSO4</name>
<proteinExistence type="evidence at protein level"/>
<evidence type="ECO:0000250" key="1">
    <source>
        <dbReference type="UniProtKB" id="S0DVT6"/>
    </source>
</evidence>
<evidence type="ECO:0000255" key="2">
    <source>
        <dbReference type="PROSITE-ProRule" id="PRU01007"/>
    </source>
</evidence>
<evidence type="ECO:0000269" key="3">
    <source>
    </source>
</evidence>
<evidence type="ECO:0000269" key="4">
    <source>
    </source>
</evidence>
<evidence type="ECO:0000269" key="5">
    <source>
    </source>
</evidence>
<evidence type="ECO:0000269" key="6">
    <source>
    </source>
</evidence>
<evidence type="ECO:0000269" key="7">
    <source>
    </source>
</evidence>
<evidence type="ECO:0000269" key="8">
    <source>
    </source>
</evidence>
<evidence type="ECO:0000269" key="9">
    <source>
    </source>
</evidence>
<evidence type="ECO:0000269" key="10">
    <source>
    </source>
</evidence>
<evidence type="ECO:0000303" key="11">
    <source>
    </source>
</evidence>
<evidence type="ECO:0000305" key="12"/>
<evidence type="ECO:0000305" key="13">
    <source>
    </source>
</evidence>
<organism>
    <name type="scientific">Fusarium oxysporum f. sp. lycopersici (strain 4287 / CBS 123668 / FGSC 9935 / NRRL 34936)</name>
    <name type="common">Fusarium vascular wilt of tomato</name>
    <dbReference type="NCBI Taxonomy" id="426428"/>
    <lineage>
        <taxon>Eukaryota</taxon>
        <taxon>Fungi</taxon>
        <taxon>Dikarya</taxon>
        <taxon>Ascomycota</taxon>
        <taxon>Pezizomycotina</taxon>
        <taxon>Sordariomycetes</taxon>
        <taxon>Hypocreomycetidae</taxon>
        <taxon>Hypocreales</taxon>
        <taxon>Nectriaceae</taxon>
        <taxon>Fusarium</taxon>
        <taxon>Fusarium oxysporum species complex</taxon>
    </lineage>
</organism>
<feature type="chain" id="PRO_0000437314" description="Aspartate kinase FUB3">
    <location>
        <begin position="1"/>
        <end position="542"/>
    </location>
</feature>
<feature type="domain" description="ACT 1" evidence="2">
    <location>
        <begin position="404"/>
        <end position="472"/>
    </location>
</feature>
<feature type="domain" description="ACT 2" evidence="2">
    <location>
        <begin position="478"/>
        <end position="542"/>
    </location>
</feature>
<gene>
    <name evidence="11" type="primary">FUB3</name>
    <name type="ORF">FOXG_15247</name>
</gene>